<reference key="1">
    <citation type="journal article" date="2009" name="Nat. Genet.">
        <title>Comparative genomic and phylogeographic analysis of Mycobacterium leprae.</title>
        <authorList>
            <person name="Monot M."/>
            <person name="Honore N."/>
            <person name="Garnier T."/>
            <person name="Zidane N."/>
            <person name="Sherafi D."/>
            <person name="Paniz-Mondolfi A."/>
            <person name="Matsuoka M."/>
            <person name="Taylor G.M."/>
            <person name="Donoghue H.D."/>
            <person name="Bouwman A."/>
            <person name="Mays S."/>
            <person name="Watson C."/>
            <person name="Lockwood D."/>
            <person name="Khamispour A."/>
            <person name="Dowlati Y."/>
            <person name="Jianping S."/>
            <person name="Rea T.H."/>
            <person name="Vera-Cabrera L."/>
            <person name="Stefani M.M."/>
            <person name="Banu S."/>
            <person name="Macdonald M."/>
            <person name="Sapkota B.R."/>
            <person name="Spencer J.S."/>
            <person name="Thomas J."/>
            <person name="Harshman K."/>
            <person name="Singh P."/>
            <person name="Busso P."/>
            <person name="Gattiker A."/>
            <person name="Rougemont J."/>
            <person name="Brennan P.J."/>
            <person name="Cole S.T."/>
        </authorList>
    </citation>
    <scope>NUCLEOTIDE SEQUENCE [LARGE SCALE GENOMIC DNA]</scope>
    <source>
        <strain>Br4923</strain>
    </source>
</reference>
<feature type="chain" id="PRO_1000166430" description="Small ribosomal subunit protein uS15">
    <location>
        <begin position="1"/>
        <end position="89"/>
    </location>
</feature>
<name>RS15_MYCLB</name>
<evidence type="ECO:0000255" key="1">
    <source>
        <dbReference type="HAMAP-Rule" id="MF_01343"/>
    </source>
</evidence>
<evidence type="ECO:0000305" key="2"/>
<comment type="function">
    <text evidence="1">One of the primary rRNA binding proteins, it binds directly to 16S rRNA where it helps nucleate assembly of the platform of the 30S subunit by binding and bridging several RNA helices of the 16S rRNA.</text>
</comment>
<comment type="function">
    <text evidence="1">Forms an intersubunit bridge (bridge B4) with the 23S rRNA of the 50S subunit in the ribosome.</text>
</comment>
<comment type="subunit">
    <text evidence="1">Part of the 30S ribosomal subunit. Forms a bridge to the 50S subunit in the 70S ribosome, contacting the 23S rRNA.</text>
</comment>
<comment type="similarity">
    <text evidence="1">Belongs to the universal ribosomal protein uS15 family.</text>
</comment>
<accession>B8ZQJ5</accession>
<dbReference type="EMBL" id="FM211192">
    <property type="protein sequence ID" value="CAR70948.1"/>
    <property type="molecule type" value="Genomic_DNA"/>
</dbReference>
<dbReference type="SMR" id="B8ZQJ5"/>
<dbReference type="KEGG" id="mlb:MLBr00853"/>
<dbReference type="HOGENOM" id="CLU_148518_0_0_11"/>
<dbReference type="Proteomes" id="UP000006900">
    <property type="component" value="Chromosome"/>
</dbReference>
<dbReference type="GO" id="GO:0022627">
    <property type="term" value="C:cytosolic small ribosomal subunit"/>
    <property type="evidence" value="ECO:0007669"/>
    <property type="project" value="TreeGrafter"/>
</dbReference>
<dbReference type="GO" id="GO:0019843">
    <property type="term" value="F:rRNA binding"/>
    <property type="evidence" value="ECO:0007669"/>
    <property type="project" value="UniProtKB-UniRule"/>
</dbReference>
<dbReference type="GO" id="GO:0003735">
    <property type="term" value="F:structural constituent of ribosome"/>
    <property type="evidence" value="ECO:0007669"/>
    <property type="project" value="InterPro"/>
</dbReference>
<dbReference type="GO" id="GO:0006412">
    <property type="term" value="P:translation"/>
    <property type="evidence" value="ECO:0007669"/>
    <property type="project" value="UniProtKB-UniRule"/>
</dbReference>
<dbReference type="CDD" id="cd00353">
    <property type="entry name" value="Ribosomal_S15p_S13e"/>
    <property type="match status" value="1"/>
</dbReference>
<dbReference type="FunFam" id="1.10.287.10:FF:000002">
    <property type="entry name" value="30S ribosomal protein S15"/>
    <property type="match status" value="1"/>
</dbReference>
<dbReference type="Gene3D" id="6.10.250.3130">
    <property type="match status" value="1"/>
</dbReference>
<dbReference type="Gene3D" id="1.10.287.10">
    <property type="entry name" value="S15/NS1, RNA-binding"/>
    <property type="match status" value="1"/>
</dbReference>
<dbReference type="HAMAP" id="MF_01343_B">
    <property type="entry name" value="Ribosomal_uS15_B"/>
    <property type="match status" value="1"/>
</dbReference>
<dbReference type="InterPro" id="IPR000589">
    <property type="entry name" value="Ribosomal_uS15"/>
</dbReference>
<dbReference type="InterPro" id="IPR005290">
    <property type="entry name" value="Ribosomal_uS15_bac-type"/>
</dbReference>
<dbReference type="InterPro" id="IPR009068">
    <property type="entry name" value="uS15_NS1_RNA-bd_sf"/>
</dbReference>
<dbReference type="NCBIfam" id="TIGR00952">
    <property type="entry name" value="S15_bact"/>
    <property type="match status" value="1"/>
</dbReference>
<dbReference type="PANTHER" id="PTHR23321">
    <property type="entry name" value="RIBOSOMAL PROTEIN S15, BACTERIAL AND ORGANELLAR"/>
    <property type="match status" value="1"/>
</dbReference>
<dbReference type="PANTHER" id="PTHR23321:SF26">
    <property type="entry name" value="SMALL RIBOSOMAL SUBUNIT PROTEIN US15M"/>
    <property type="match status" value="1"/>
</dbReference>
<dbReference type="Pfam" id="PF00312">
    <property type="entry name" value="Ribosomal_S15"/>
    <property type="match status" value="1"/>
</dbReference>
<dbReference type="SMART" id="SM01387">
    <property type="entry name" value="Ribosomal_S15"/>
    <property type="match status" value="1"/>
</dbReference>
<dbReference type="SUPFAM" id="SSF47060">
    <property type="entry name" value="S15/NS1 RNA-binding domain"/>
    <property type="match status" value="1"/>
</dbReference>
<dbReference type="PROSITE" id="PS00362">
    <property type="entry name" value="RIBOSOMAL_S15"/>
    <property type="match status" value="1"/>
</dbReference>
<organism>
    <name type="scientific">Mycobacterium leprae (strain Br4923)</name>
    <dbReference type="NCBI Taxonomy" id="561304"/>
    <lineage>
        <taxon>Bacteria</taxon>
        <taxon>Bacillati</taxon>
        <taxon>Actinomycetota</taxon>
        <taxon>Actinomycetes</taxon>
        <taxon>Mycobacteriales</taxon>
        <taxon>Mycobacteriaceae</taxon>
        <taxon>Mycobacterium</taxon>
    </lineage>
</organism>
<gene>
    <name evidence="1" type="primary">rpsO</name>
    <name type="ordered locus">MLBr00853</name>
</gene>
<sequence>MALTSEQKKEILSSYGLHATDTGSPEAQIALLTKRIADLTEHLKVHKHDHHSRRGLLLLVGRRRRLIKYLSLIDVQRYRSLIERLGLRR</sequence>
<proteinExistence type="inferred from homology"/>
<keyword id="KW-0687">Ribonucleoprotein</keyword>
<keyword id="KW-0689">Ribosomal protein</keyword>
<keyword id="KW-0694">RNA-binding</keyword>
<keyword id="KW-0699">rRNA-binding</keyword>
<protein>
    <recommendedName>
        <fullName evidence="1">Small ribosomal subunit protein uS15</fullName>
    </recommendedName>
    <alternativeName>
        <fullName evidence="2">30S ribosomal protein S15</fullName>
    </alternativeName>
</protein>